<sequence>MSDTQHQVNVRVDTRYLPEQSAPEQNRFAFAYTVTIENQGEVPAQLLSRHWIITDGDGRTQEVRGAGVVGEQPLIAPGAQHTYTSGTVLATRVGSMRGSYQMLGSDGIAFDAAIPVFRLAVPGALH</sequence>
<gene>
    <name evidence="1" type="primary">apaG</name>
    <name type="ordered locus">PA14_07710</name>
</gene>
<protein>
    <recommendedName>
        <fullName evidence="1">Protein ApaG</fullName>
    </recommendedName>
</protein>
<proteinExistence type="inferred from homology"/>
<dbReference type="EMBL" id="CP000438">
    <property type="protein sequence ID" value="ABJ15555.1"/>
    <property type="molecule type" value="Genomic_DNA"/>
</dbReference>
<dbReference type="RefSeq" id="WP_003085085.1">
    <property type="nucleotide sequence ID" value="NZ_CP034244.1"/>
</dbReference>
<dbReference type="SMR" id="Q02TH2"/>
<dbReference type="KEGG" id="pau:PA14_07710"/>
<dbReference type="PseudoCAP" id="PA14_07710"/>
<dbReference type="HOGENOM" id="CLU_128074_0_0_6"/>
<dbReference type="BioCyc" id="PAER208963:G1G74-636-MONOMER"/>
<dbReference type="Proteomes" id="UP000000653">
    <property type="component" value="Chromosome"/>
</dbReference>
<dbReference type="GO" id="GO:0070987">
    <property type="term" value="P:error-free translesion synthesis"/>
    <property type="evidence" value="ECO:0007669"/>
    <property type="project" value="TreeGrafter"/>
</dbReference>
<dbReference type="Gene3D" id="2.60.40.1470">
    <property type="entry name" value="ApaG domain"/>
    <property type="match status" value="1"/>
</dbReference>
<dbReference type="HAMAP" id="MF_00791">
    <property type="entry name" value="ApaG"/>
    <property type="match status" value="1"/>
</dbReference>
<dbReference type="InterPro" id="IPR007474">
    <property type="entry name" value="ApaG_domain"/>
</dbReference>
<dbReference type="InterPro" id="IPR036767">
    <property type="entry name" value="ApaG_sf"/>
</dbReference>
<dbReference type="InterPro" id="IPR023065">
    <property type="entry name" value="Uncharacterised_ApaG"/>
</dbReference>
<dbReference type="NCBIfam" id="NF003967">
    <property type="entry name" value="PRK05461.1"/>
    <property type="match status" value="1"/>
</dbReference>
<dbReference type="PANTHER" id="PTHR14289">
    <property type="entry name" value="F-BOX ONLY PROTEIN 3"/>
    <property type="match status" value="1"/>
</dbReference>
<dbReference type="PANTHER" id="PTHR14289:SF16">
    <property type="entry name" value="POLYMERASE DELTA-INTERACTING PROTEIN 2"/>
    <property type="match status" value="1"/>
</dbReference>
<dbReference type="Pfam" id="PF04379">
    <property type="entry name" value="DUF525"/>
    <property type="match status" value="1"/>
</dbReference>
<dbReference type="SUPFAM" id="SSF110069">
    <property type="entry name" value="ApaG-like"/>
    <property type="match status" value="1"/>
</dbReference>
<dbReference type="PROSITE" id="PS51087">
    <property type="entry name" value="APAG"/>
    <property type="match status" value="1"/>
</dbReference>
<reference key="1">
    <citation type="journal article" date="2006" name="Genome Biol.">
        <title>Genomic analysis reveals that Pseudomonas aeruginosa virulence is combinatorial.</title>
        <authorList>
            <person name="Lee D.G."/>
            <person name="Urbach J.M."/>
            <person name="Wu G."/>
            <person name="Liberati N.T."/>
            <person name="Feinbaum R.L."/>
            <person name="Miyata S."/>
            <person name="Diggins L.T."/>
            <person name="He J."/>
            <person name="Saucier M."/>
            <person name="Deziel E."/>
            <person name="Friedman L."/>
            <person name="Li L."/>
            <person name="Grills G."/>
            <person name="Montgomery K."/>
            <person name="Kucherlapati R."/>
            <person name="Rahme L.G."/>
            <person name="Ausubel F.M."/>
        </authorList>
    </citation>
    <scope>NUCLEOTIDE SEQUENCE [LARGE SCALE GENOMIC DNA]</scope>
    <source>
        <strain>UCBPP-PA14</strain>
    </source>
</reference>
<name>APAG_PSEAB</name>
<feature type="chain" id="PRO_1000083632" description="Protein ApaG">
    <location>
        <begin position="1"/>
        <end position="126"/>
    </location>
</feature>
<feature type="domain" description="ApaG" evidence="1">
    <location>
        <begin position="2"/>
        <end position="126"/>
    </location>
</feature>
<evidence type="ECO:0000255" key="1">
    <source>
        <dbReference type="HAMAP-Rule" id="MF_00791"/>
    </source>
</evidence>
<accession>Q02TH2</accession>
<organism>
    <name type="scientific">Pseudomonas aeruginosa (strain UCBPP-PA14)</name>
    <dbReference type="NCBI Taxonomy" id="208963"/>
    <lineage>
        <taxon>Bacteria</taxon>
        <taxon>Pseudomonadati</taxon>
        <taxon>Pseudomonadota</taxon>
        <taxon>Gammaproteobacteria</taxon>
        <taxon>Pseudomonadales</taxon>
        <taxon>Pseudomonadaceae</taxon>
        <taxon>Pseudomonas</taxon>
    </lineage>
</organism>